<dbReference type="EC" id="5.1.1.3" evidence="1"/>
<dbReference type="EMBL" id="AM408590">
    <property type="protein sequence ID" value="CAL71387.1"/>
    <property type="molecule type" value="Genomic_DNA"/>
</dbReference>
<dbReference type="RefSeq" id="WP_011799170.1">
    <property type="nucleotide sequence ID" value="NC_008769.1"/>
</dbReference>
<dbReference type="SMR" id="A1KIC8"/>
<dbReference type="KEGG" id="mbb:BCG_1400"/>
<dbReference type="HOGENOM" id="CLU_052344_0_1_11"/>
<dbReference type="UniPathway" id="UPA00219"/>
<dbReference type="Proteomes" id="UP000001472">
    <property type="component" value="Chromosome"/>
</dbReference>
<dbReference type="GO" id="GO:0008881">
    <property type="term" value="F:glutamate racemase activity"/>
    <property type="evidence" value="ECO:0007669"/>
    <property type="project" value="UniProtKB-UniRule"/>
</dbReference>
<dbReference type="GO" id="GO:0071555">
    <property type="term" value="P:cell wall organization"/>
    <property type="evidence" value="ECO:0007669"/>
    <property type="project" value="UniProtKB-KW"/>
</dbReference>
<dbReference type="GO" id="GO:0009252">
    <property type="term" value="P:peptidoglycan biosynthetic process"/>
    <property type="evidence" value="ECO:0007669"/>
    <property type="project" value="UniProtKB-UniRule"/>
</dbReference>
<dbReference type="GO" id="GO:0008360">
    <property type="term" value="P:regulation of cell shape"/>
    <property type="evidence" value="ECO:0007669"/>
    <property type="project" value="UniProtKB-KW"/>
</dbReference>
<dbReference type="FunFam" id="3.40.50.1860:FF:000001">
    <property type="entry name" value="Glutamate racemase"/>
    <property type="match status" value="1"/>
</dbReference>
<dbReference type="Gene3D" id="3.40.50.1860">
    <property type="match status" value="2"/>
</dbReference>
<dbReference type="HAMAP" id="MF_00258">
    <property type="entry name" value="Glu_racemase"/>
    <property type="match status" value="1"/>
</dbReference>
<dbReference type="InterPro" id="IPR015942">
    <property type="entry name" value="Asp/Glu/hydantoin_racemase"/>
</dbReference>
<dbReference type="InterPro" id="IPR001920">
    <property type="entry name" value="Asp/Glu_race"/>
</dbReference>
<dbReference type="InterPro" id="IPR018187">
    <property type="entry name" value="Asp/Glu_racemase_AS_1"/>
</dbReference>
<dbReference type="InterPro" id="IPR033134">
    <property type="entry name" value="Asp/Glu_racemase_AS_2"/>
</dbReference>
<dbReference type="InterPro" id="IPR004391">
    <property type="entry name" value="Glu_race"/>
</dbReference>
<dbReference type="NCBIfam" id="TIGR00067">
    <property type="entry name" value="glut_race"/>
    <property type="match status" value="1"/>
</dbReference>
<dbReference type="PANTHER" id="PTHR21198">
    <property type="entry name" value="GLUTAMATE RACEMASE"/>
    <property type="match status" value="1"/>
</dbReference>
<dbReference type="PANTHER" id="PTHR21198:SF2">
    <property type="entry name" value="GLUTAMATE RACEMASE"/>
    <property type="match status" value="1"/>
</dbReference>
<dbReference type="Pfam" id="PF01177">
    <property type="entry name" value="Asp_Glu_race"/>
    <property type="match status" value="1"/>
</dbReference>
<dbReference type="SUPFAM" id="SSF53681">
    <property type="entry name" value="Aspartate/glutamate racemase"/>
    <property type="match status" value="2"/>
</dbReference>
<dbReference type="PROSITE" id="PS00923">
    <property type="entry name" value="ASP_GLU_RACEMASE_1"/>
    <property type="match status" value="1"/>
</dbReference>
<dbReference type="PROSITE" id="PS00924">
    <property type="entry name" value="ASP_GLU_RACEMASE_2"/>
    <property type="match status" value="1"/>
</dbReference>
<gene>
    <name evidence="1" type="primary">murI</name>
    <name type="ordered locus">BCG_1400</name>
</gene>
<sequence>MNSPLAPVGVFDSGVGGLTVARAIIDQLPDEDIVYVGDTGNGPYGPLTIPEIRAHALAIGDDLVGRGVKALVIACNSASSACLRDARERYQVPVVEVILPAVRRAVAATRNGRIGVIGTRATITSHAYQDAFAAARDTEITAVACPRFVDFVELGVTSGRQVLGLAQGYLEPLQRAEVDTLVLGCTHYPLLSGLIQLAMGENVTLVSSAEETAKEVVRVLTEIDLLRPHDAPPATRIFEATGDPEAFTKLAARFLGPVLGGVQPVHPSRIH</sequence>
<protein>
    <recommendedName>
        <fullName evidence="1">Glutamate racemase</fullName>
        <ecNumber evidence="1">5.1.1.3</ecNumber>
    </recommendedName>
</protein>
<comment type="function">
    <text evidence="1">Provides the (R)-glutamate required for cell wall biosynthesis.</text>
</comment>
<comment type="catalytic activity">
    <reaction evidence="1">
        <text>L-glutamate = D-glutamate</text>
        <dbReference type="Rhea" id="RHEA:12813"/>
        <dbReference type="ChEBI" id="CHEBI:29985"/>
        <dbReference type="ChEBI" id="CHEBI:29986"/>
        <dbReference type="EC" id="5.1.1.3"/>
    </reaction>
</comment>
<comment type="pathway">
    <text evidence="1">Cell wall biogenesis; peptidoglycan biosynthesis.</text>
</comment>
<comment type="similarity">
    <text evidence="1">Belongs to the aspartate/glutamate racemases family.</text>
</comment>
<keyword id="KW-0133">Cell shape</keyword>
<keyword id="KW-0961">Cell wall biogenesis/degradation</keyword>
<keyword id="KW-0413">Isomerase</keyword>
<keyword id="KW-0573">Peptidoglycan synthesis</keyword>
<reference key="1">
    <citation type="journal article" date="2007" name="Proc. Natl. Acad. Sci. U.S.A.">
        <title>Genome plasticity of BCG and impact on vaccine efficacy.</title>
        <authorList>
            <person name="Brosch R."/>
            <person name="Gordon S.V."/>
            <person name="Garnier T."/>
            <person name="Eiglmeier K."/>
            <person name="Frigui W."/>
            <person name="Valenti P."/>
            <person name="Dos Santos S."/>
            <person name="Duthoy S."/>
            <person name="Lacroix C."/>
            <person name="Garcia-Pelayo C."/>
            <person name="Inwald J.K."/>
            <person name="Golby P."/>
            <person name="Garcia J.N."/>
            <person name="Hewinson R.G."/>
            <person name="Behr M.A."/>
            <person name="Quail M.A."/>
            <person name="Churcher C."/>
            <person name="Barrell B.G."/>
            <person name="Parkhill J."/>
            <person name="Cole S.T."/>
        </authorList>
    </citation>
    <scope>NUCLEOTIDE SEQUENCE [LARGE SCALE GENOMIC DNA]</scope>
    <source>
        <strain>BCG / Pasteur 1173P2</strain>
    </source>
</reference>
<accession>A1KIC8</accession>
<evidence type="ECO:0000255" key="1">
    <source>
        <dbReference type="HAMAP-Rule" id="MF_00258"/>
    </source>
</evidence>
<name>MURI_MYCBP</name>
<proteinExistence type="inferred from homology"/>
<organism>
    <name type="scientific">Mycobacterium bovis (strain BCG / Pasteur 1173P2)</name>
    <dbReference type="NCBI Taxonomy" id="410289"/>
    <lineage>
        <taxon>Bacteria</taxon>
        <taxon>Bacillati</taxon>
        <taxon>Actinomycetota</taxon>
        <taxon>Actinomycetes</taxon>
        <taxon>Mycobacteriales</taxon>
        <taxon>Mycobacteriaceae</taxon>
        <taxon>Mycobacterium</taxon>
        <taxon>Mycobacterium tuberculosis complex</taxon>
    </lineage>
</organism>
<feature type="chain" id="PRO_1000047584" description="Glutamate racemase">
    <location>
        <begin position="1"/>
        <end position="271"/>
    </location>
</feature>
<feature type="active site" description="Proton donor/acceptor" evidence="1">
    <location>
        <position position="75"/>
    </location>
</feature>
<feature type="active site" description="Proton donor/acceptor" evidence="1">
    <location>
        <position position="185"/>
    </location>
</feature>
<feature type="binding site" evidence="1">
    <location>
        <begin position="12"/>
        <end position="13"/>
    </location>
    <ligand>
        <name>substrate</name>
    </ligand>
</feature>
<feature type="binding site" evidence="1">
    <location>
        <begin position="44"/>
        <end position="45"/>
    </location>
    <ligand>
        <name>substrate</name>
    </ligand>
</feature>
<feature type="binding site" evidence="1">
    <location>
        <begin position="76"/>
        <end position="77"/>
    </location>
    <ligand>
        <name>substrate</name>
    </ligand>
</feature>
<feature type="binding site" evidence="1">
    <location>
        <begin position="186"/>
        <end position="187"/>
    </location>
    <ligand>
        <name>substrate</name>
    </ligand>
</feature>